<keyword id="KW-0001">2Fe-2S</keyword>
<keyword id="KW-0028">Amino-acid biosynthesis</keyword>
<keyword id="KW-0100">Branched-chain amino acid biosynthesis</keyword>
<keyword id="KW-0408">Iron</keyword>
<keyword id="KW-0411">Iron-sulfur</keyword>
<keyword id="KW-0456">Lyase</keyword>
<keyword id="KW-0460">Magnesium</keyword>
<keyword id="KW-0479">Metal-binding</keyword>
<accession>Q0TAU9</accession>
<comment type="function">
    <text evidence="1">Functions in the biosynthesis of branched-chain amino acids. Catalyzes the dehydration of (2R,3R)-2,3-dihydroxy-3-methylpentanoate (2,3-dihydroxy-3-methylvalerate) into 2-oxo-3-methylpentanoate (2-oxo-3-methylvalerate) and of (2R)-2,3-dihydroxy-3-methylbutanoate (2,3-dihydroxyisovalerate) into 2-oxo-3-methylbutanoate (2-oxoisovalerate), the penultimate precursor to L-isoleucine and L-valine, respectively.</text>
</comment>
<comment type="catalytic activity">
    <reaction evidence="1">
        <text>(2R)-2,3-dihydroxy-3-methylbutanoate = 3-methyl-2-oxobutanoate + H2O</text>
        <dbReference type="Rhea" id="RHEA:24809"/>
        <dbReference type="ChEBI" id="CHEBI:11851"/>
        <dbReference type="ChEBI" id="CHEBI:15377"/>
        <dbReference type="ChEBI" id="CHEBI:49072"/>
        <dbReference type="EC" id="4.2.1.9"/>
    </reaction>
    <physiologicalReaction direction="left-to-right" evidence="1">
        <dbReference type="Rhea" id="RHEA:24810"/>
    </physiologicalReaction>
</comment>
<comment type="catalytic activity">
    <reaction evidence="1">
        <text>(2R,3R)-2,3-dihydroxy-3-methylpentanoate = (S)-3-methyl-2-oxopentanoate + H2O</text>
        <dbReference type="Rhea" id="RHEA:27694"/>
        <dbReference type="ChEBI" id="CHEBI:15377"/>
        <dbReference type="ChEBI" id="CHEBI:35146"/>
        <dbReference type="ChEBI" id="CHEBI:49258"/>
        <dbReference type="EC" id="4.2.1.9"/>
    </reaction>
    <physiologicalReaction direction="left-to-right" evidence="1">
        <dbReference type="Rhea" id="RHEA:27695"/>
    </physiologicalReaction>
</comment>
<comment type="cofactor">
    <cofactor evidence="1">
        <name>[2Fe-2S] cluster</name>
        <dbReference type="ChEBI" id="CHEBI:190135"/>
    </cofactor>
    <text evidence="1">Binds 1 [2Fe-2S] cluster per subunit. This cluster acts as a Lewis acid cofactor.</text>
</comment>
<comment type="cofactor">
    <cofactor evidence="1">
        <name>Mg(2+)</name>
        <dbReference type="ChEBI" id="CHEBI:18420"/>
    </cofactor>
</comment>
<comment type="pathway">
    <text evidence="1">Amino-acid biosynthesis; L-isoleucine biosynthesis; L-isoleucine from 2-oxobutanoate: step 3/4.</text>
</comment>
<comment type="pathway">
    <text evidence="1">Amino-acid biosynthesis; L-valine biosynthesis; L-valine from pyruvate: step 3/4.</text>
</comment>
<comment type="subunit">
    <text evidence="1">Homodimer.</text>
</comment>
<comment type="similarity">
    <text evidence="1">Belongs to the IlvD/Edd family.</text>
</comment>
<feature type="chain" id="PRO_1000000981" description="Dihydroxy-acid dehydratase">
    <location>
        <begin position="1"/>
        <end position="616"/>
    </location>
</feature>
<feature type="active site" description="Proton acceptor" evidence="1">
    <location>
        <position position="517"/>
    </location>
</feature>
<feature type="binding site" evidence="1">
    <location>
        <position position="81"/>
    </location>
    <ligand>
        <name>Mg(2+)</name>
        <dbReference type="ChEBI" id="CHEBI:18420"/>
    </ligand>
</feature>
<feature type="binding site" evidence="1">
    <location>
        <position position="122"/>
    </location>
    <ligand>
        <name>[2Fe-2S] cluster</name>
        <dbReference type="ChEBI" id="CHEBI:190135"/>
    </ligand>
</feature>
<feature type="binding site" evidence="1">
    <location>
        <position position="123"/>
    </location>
    <ligand>
        <name>Mg(2+)</name>
        <dbReference type="ChEBI" id="CHEBI:18420"/>
    </ligand>
</feature>
<feature type="binding site" description="via carbamate group" evidence="1">
    <location>
        <position position="124"/>
    </location>
    <ligand>
        <name>Mg(2+)</name>
        <dbReference type="ChEBI" id="CHEBI:18420"/>
    </ligand>
</feature>
<feature type="binding site" evidence="1">
    <location>
        <position position="195"/>
    </location>
    <ligand>
        <name>[2Fe-2S] cluster</name>
        <dbReference type="ChEBI" id="CHEBI:190135"/>
    </ligand>
</feature>
<feature type="binding site" evidence="1">
    <location>
        <position position="491"/>
    </location>
    <ligand>
        <name>Mg(2+)</name>
        <dbReference type="ChEBI" id="CHEBI:18420"/>
    </ligand>
</feature>
<feature type="modified residue" description="N6-carboxylysine" evidence="1">
    <location>
        <position position="124"/>
    </location>
</feature>
<organism>
    <name type="scientific">Escherichia coli O6:K15:H31 (strain 536 / UPEC)</name>
    <dbReference type="NCBI Taxonomy" id="362663"/>
    <lineage>
        <taxon>Bacteria</taxon>
        <taxon>Pseudomonadati</taxon>
        <taxon>Pseudomonadota</taxon>
        <taxon>Gammaproteobacteria</taxon>
        <taxon>Enterobacterales</taxon>
        <taxon>Enterobacteriaceae</taxon>
        <taxon>Escherichia</taxon>
    </lineage>
</organism>
<reference key="1">
    <citation type="journal article" date="2006" name="Mol. Microbiol.">
        <title>Role of pathogenicity island-associated integrases in the genome plasticity of uropathogenic Escherichia coli strain 536.</title>
        <authorList>
            <person name="Hochhut B."/>
            <person name="Wilde C."/>
            <person name="Balling G."/>
            <person name="Middendorf B."/>
            <person name="Dobrindt U."/>
            <person name="Brzuszkiewicz E."/>
            <person name="Gottschalk G."/>
            <person name="Carniel E."/>
            <person name="Hacker J."/>
        </authorList>
    </citation>
    <scope>NUCLEOTIDE SEQUENCE [LARGE SCALE GENOMIC DNA]</scope>
    <source>
        <strain>536 / UPEC</strain>
    </source>
</reference>
<name>ILVD_ECOL5</name>
<evidence type="ECO:0000255" key="1">
    <source>
        <dbReference type="HAMAP-Rule" id="MF_00012"/>
    </source>
</evidence>
<sequence length="616" mass="65544">MPKYRSATTTHGRNMAGARALWRATGMTDADFGKPIIAVVNSFTQFVPGHVHLRDLGKLVAEQIEAAGGVAKEFNTIAVDDGIAMGHGGMLYSLPSRELIADSVEYMVNAHCADAMVCISNCDKITPGMLMASLRLNIPVIFVSGGPMEAGKTKLSDQIIKLDLVDAMIQGADPKVSDSQSDQVERSACPTCGSCSGMFTANSMNCLTEALGLSQPGNGSLLATHADRKQLFLNAGKRIVELTKRYYEQDDESALPRNIASKAAFENAMTLDIAMGGSTNTVLHLLAAAQEAEIDFTMSDIDKLSRKVPQLCKVAPSTQKYHMEDVHRAGGVIGILGELDRAGLLNRDVKNVLGLTLPQTLEQYDIIVTQDDAVKNMFRAGPAGIRTTQAFSQDCRWDTLDDDRSNGCIRSLEHAYSKDGGLAVLYGNFAENGCIVKTAGVDDSILKFTGPAKVYESQDDAVEAILGGKVVAGDVVVIRYEGPKGGPGMQEMLYPTSFLKSMGLGKACALITDGRFSGGTSGLSIGHVSPEAASGGSIGLIEDGDLIAIDIPNRGIQLQVSDAELAARREAQEARGNKAWTPKNRERQVSFALRAYASLATSADKGAVRDKSKLGG</sequence>
<gene>
    <name evidence="1" type="primary">ilvD</name>
    <name type="ordered locus">ECP_3964</name>
</gene>
<protein>
    <recommendedName>
        <fullName evidence="1">Dihydroxy-acid dehydratase</fullName>
        <shortName evidence="1">DAD</shortName>
        <ecNumber evidence="1">4.2.1.9</ecNumber>
    </recommendedName>
</protein>
<proteinExistence type="inferred from homology"/>
<dbReference type="EC" id="4.2.1.9" evidence="1"/>
<dbReference type="EMBL" id="CP000247">
    <property type="protein sequence ID" value="ABG71930.1"/>
    <property type="molecule type" value="Genomic_DNA"/>
</dbReference>
<dbReference type="RefSeq" id="WP_001127372.1">
    <property type="nucleotide sequence ID" value="NC_008253.1"/>
</dbReference>
<dbReference type="SMR" id="Q0TAU9"/>
<dbReference type="KEGG" id="ecp:ECP_3964"/>
<dbReference type="HOGENOM" id="CLU_014271_4_2_6"/>
<dbReference type="UniPathway" id="UPA00047">
    <property type="reaction ID" value="UER00057"/>
</dbReference>
<dbReference type="UniPathway" id="UPA00049">
    <property type="reaction ID" value="UER00061"/>
</dbReference>
<dbReference type="Proteomes" id="UP000009182">
    <property type="component" value="Chromosome"/>
</dbReference>
<dbReference type="GO" id="GO:0005829">
    <property type="term" value="C:cytosol"/>
    <property type="evidence" value="ECO:0007669"/>
    <property type="project" value="TreeGrafter"/>
</dbReference>
<dbReference type="GO" id="GO:0051537">
    <property type="term" value="F:2 iron, 2 sulfur cluster binding"/>
    <property type="evidence" value="ECO:0007669"/>
    <property type="project" value="UniProtKB-UniRule"/>
</dbReference>
<dbReference type="GO" id="GO:0004160">
    <property type="term" value="F:dihydroxy-acid dehydratase activity"/>
    <property type="evidence" value="ECO:0007669"/>
    <property type="project" value="UniProtKB-UniRule"/>
</dbReference>
<dbReference type="GO" id="GO:0000287">
    <property type="term" value="F:magnesium ion binding"/>
    <property type="evidence" value="ECO:0007669"/>
    <property type="project" value="UniProtKB-UniRule"/>
</dbReference>
<dbReference type="GO" id="GO:0009097">
    <property type="term" value="P:isoleucine biosynthetic process"/>
    <property type="evidence" value="ECO:0007669"/>
    <property type="project" value="UniProtKB-UniRule"/>
</dbReference>
<dbReference type="GO" id="GO:0009099">
    <property type="term" value="P:L-valine biosynthetic process"/>
    <property type="evidence" value="ECO:0007669"/>
    <property type="project" value="UniProtKB-UniRule"/>
</dbReference>
<dbReference type="FunFam" id="3.50.30.80:FF:000001">
    <property type="entry name" value="Dihydroxy-acid dehydratase"/>
    <property type="match status" value="1"/>
</dbReference>
<dbReference type="Gene3D" id="3.50.30.80">
    <property type="entry name" value="IlvD/EDD C-terminal domain-like"/>
    <property type="match status" value="1"/>
</dbReference>
<dbReference type="HAMAP" id="MF_00012">
    <property type="entry name" value="IlvD"/>
    <property type="match status" value="1"/>
</dbReference>
<dbReference type="InterPro" id="IPR042096">
    <property type="entry name" value="Dihydro-acid_dehy_C"/>
</dbReference>
<dbReference type="InterPro" id="IPR004404">
    <property type="entry name" value="DihydroxyA_deHydtase"/>
</dbReference>
<dbReference type="InterPro" id="IPR020558">
    <property type="entry name" value="DiOHA_6PGluconate_deHydtase_CS"/>
</dbReference>
<dbReference type="InterPro" id="IPR056740">
    <property type="entry name" value="ILV_EDD_C"/>
</dbReference>
<dbReference type="InterPro" id="IPR000581">
    <property type="entry name" value="ILV_EDD_N"/>
</dbReference>
<dbReference type="InterPro" id="IPR037237">
    <property type="entry name" value="IlvD/EDD_N"/>
</dbReference>
<dbReference type="NCBIfam" id="TIGR00110">
    <property type="entry name" value="ilvD"/>
    <property type="match status" value="1"/>
</dbReference>
<dbReference type="NCBIfam" id="NF009103">
    <property type="entry name" value="PRK12448.1"/>
    <property type="match status" value="1"/>
</dbReference>
<dbReference type="PANTHER" id="PTHR43661">
    <property type="entry name" value="D-XYLONATE DEHYDRATASE"/>
    <property type="match status" value="1"/>
</dbReference>
<dbReference type="PANTHER" id="PTHR43661:SF3">
    <property type="entry name" value="D-XYLONATE DEHYDRATASE YAGF-RELATED"/>
    <property type="match status" value="1"/>
</dbReference>
<dbReference type="Pfam" id="PF24877">
    <property type="entry name" value="ILV_EDD_C"/>
    <property type="match status" value="1"/>
</dbReference>
<dbReference type="Pfam" id="PF00920">
    <property type="entry name" value="ILVD_EDD_N"/>
    <property type="match status" value="1"/>
</dbReference>
<dbReference type="SUPFAM" id="SSF143975">
    <property type="entry name" value="IlvD/EDD N-terminal domain-like"/>
    <property type="match status" value="1"/>
</dbReference>
<dbReference type="SUPFAM" id="SSF52016">
    <property type="entry name" value="LeuD/IlvD-like"/>
    <property type="match status" value="1"/>
</dbReference>
<dbReference type="PROSITE" id="PS00886">
    <property type="entry name" value="ILVD_EDD_1"/>
    <property type="match status" value="1"/>
</dbReference>
<dbReference type="PROSITE" id="PS00887">
    <property type="entry name" value="ILVD_EDD_2"/>
    <property type="match status" value="1"/>
</dbReference>